<comment type="function">
    <text>Tropomyosin, in association with the troponin complex, plays a central role in the calcium dependent regulation of muscle contraction.</text>
</comment>
<comment type="subunit">
    <text evidence="1">Homodimer.</text>
</comment>
<comment type="domain">
    <text>The molecule is in a coiled coil structure that is formed by 2 polypeptide chains. The sequence exhibits a prominent seven-residues periodicity.</text>
</comment>
<comment type="allergen">
    <text>Causes an allergic reaction in human. Binds to IgE.</text>
</comment>
<comment type="similarity">
    <text evidence="2">Belongs to the tropomyosin family.</text>
</comment>
<comment type="sequence caution" evidence="2">
    <conflict type="erroneous initiation">
        <sequence resource="EMBL-CDS" id="BAA04557"/>
    </conflict>
</comment>
<dbReference type="EMBL" id="D17682">
    <property type="protein sequence ID" value="BAA04557.1"/>
    <property type="status" value="ALT_INIT"/>
    <property type="molecule type" value="mRNA"/>
</dbReference>
<dbReference type="RefSeq" id="XP_046913236.1">
    <property type="nucleotide sequence ID" value="XM_047057280.1"/>
</dbReference>
<dbReference type="SMR" id="Q23939"/>
<dbReference type="Allergome" id="296">
    <property type="allergen name" value="Der f 10"/>
</dbReference>
<dbReference type="Allergome" id="3248">
    <property type="allergen name" value="Der f 10.0101"/>
</dbReference>
<dbReference type="GeneID" id="124494125"/>
<dbReference type="OrthoDB" id="128924at2759"/>
<dbReference type="FunFam" id="1.20.5.170:FF:000005">
    <property type="entry name" value="Tropomyosin alpha-1 chain"/>
    <property type="match status" value="1"/>
</dbReference>
<dbReference type="FunFam" id="1.20.5.170:FF:000001">
    <property type="entry name" value="Tropomyosin alpha-1 chain isoform 1"/>
    <property type="match status" value="1"/>
</dbReference>
<dbReference type="FunFam" id="1.20.5.340:FF:000001">
    <property type="entry name" value="Tropomyosin alpha-1 chain isoform 2"/>
    <property type="match status" value="1"/>
</dbReference>
<dbReference type="Gene3D" id="1.20.5.170">
    <property type="match status" value="2"/>
</dbReference>
<dbReference type="Gene3D" id="1.20.5.340">
    <property type="match status" value="1"/>
</dbReference>
<dbReference type="InterPro" id="IPR000533">
    <property type="entry name" value="Tropomyosin"/>
</dbReference>
<dbReference type="PANTHER" id="PTHR19269">
    <property type="entry name" value="TROPOMYOSIN"/>
    <property type="match status" value="1"/>
</dbReference>
<dbReference type="Pfam" id="PF00261">
    <property type="entry name" value="Tropomyosin"/>
    <property type="match status" value="1"/>
</dbReference>
<dbReference type="PRINTS" id="PR00194">
    <property type="entry name" value="TROPOMYOSIN"/>
</dbReference>
<dbReference type="SUPFAM" id="SSF57997">
    <property type="entry name" value="Tropomyosin"/>
    <property type="match status" value="1"/>
</dbReference>
<dbReference type="PROSITE" id="PS00326">
    <property type="entry name" value="TROPOMYOSIN"/>
    <property type="match status" value="1"/>
</dbReference>
<evidence type="ECO:0000250" key="1"/>
<evidence type="ECO:0000305" key="2"/>
<organism>
    <name type="scientific">Dermatophagoides farinae</name>
    <name type="common">American house dust mite</name>
    <dbReference type="NCBI Taxonomy" id="6954"/>
    <lineage>
        <taxon>Eukaryota</taxon>
        <taxon>Metazoa</taxon>
        <taxon>Ecdysozoa</taxon>
        <taxon>Arthropoda</taxon>
        <taxon>Chelicerata</taxon>
        <taxon>Arachnida</taxon>
        <taxon>Acari</taxon>
        <taxon>Acariformes</taxon>
        <taxon>Sarcoptiformes</taxon>
        <taxon>Astigmata</taxon>
        <taxon>Psoroptidia</taxon>
        <taxon>Analgoidea</taxon>
        <taxon>Pyroglyphidae</taxon>
        <taxon>Dermatophagoidinae</taxon>
        <taxon>Dermatophagoides</taxon>
    </lineage>
</organism>
<reference key="1">
    <citation type="journal article" date="1995" name="J. Allergy Clin. Immunol.">
        <title>Immunochemical characterization of recombinant and native tropomyosins as a new allergen from the house dust mite, Dermatophagoides farinae.</title>
        <authorList>
            <person name="Aki T."/>
            <person name="Kodama T."/>
            <person name="Fujikawa A."/>
            <person name="Miura K."/>
            <person name="Shigeta S."/>
            <person name="Wada T."/>
            <person name="Jyo T."/>
            <person name="Murooka Y."/>
            <person name="Oka S."/>
            <person name="Ono K."/>
        </authorList>
    </citation>
    <scope>NUCLEOTIDE SEQUENCE [MRNA]</scope>
    <scope>PARTIAL PROTEIN SEQUENCE</scope>
</reference>
<keyword id="KW-0020">Allergen</keyword>
<keyword id="KW-0175">Coiled coil</keyword>
<keyword id="KW-0903">Direct protein sequencing</keyword>
<keyword id="KW-0677">Repeat</keyword>
<sequence>MEAIKKKMQAMKLEKDNAIDRAEIAEQKARDANLRAEKSEEEVRALQKKIQQIENELDQVQEQLSAANTKLEEKEKALQTAEGDVAALNRRIQLIEEDLERSEERLKIATAKLEEASQSADESERMRKMLEHRSITDEERMDGLENQLKEARMMAEDADRKYDEVARKLAMVEADLERAEERAETGESKIVELEEELRVVGNNLKSLEVSEEKAQQREEAYEQQIRIMTAKLKEAEARAEFAERSVQKLQKEVDRLEDELVHEKEKYKSISDELDQTFAELTGY</sequence>
<name>TPM_DERFA</name>
<feature type="chain" id="PRO_0000205678" description="Tropomyosin">
    <location>
        <begin position="1"/>
        <end position="284"/>
    </location>
</feature>
<feature type="coiled-coil region" evidence="1">
    <location>
        <begin position="1"/>
        <end position="284"/>
    </location>
</feature>
<accession>Q23939</accession>
<proteinExistence type="evidence at protein level"/>
<protein>
    <recommendedName>
        <fullName>Tropomyosin</fullName>
    </recommendedName>
    <alternativeName>
        <fullName>Mag44</fullName>
    </alternativeName>
    <allergenName>Der f 10</allergenName>
</protein>